<name>THIM_BACCN</name>
<dbReference type="EC" id="2.7.1.50" evidence="1"/>
<dbReference type="EMBL" id="CP000764">
    <property type="protein sequence ID" value="ABS20721.1"/>
    <property type="molecule type" value="Genomic_DNA"/>
</dbReference>
<dbReference type="RefSeq" id="WP_011983479.1">
    <property type="nucleotide sequence ID" value="NC_009674.1"/>
</dbReference>
<dbReference type="SMR" id="A7GKR3"/>
<dbReference type="STRING" id="315749.Bcer98_0363"/>
<dbReference type="GeneID" id="33895715"/>
<dbReference type="KEGG" id="bcy:Bcer98_0363"/>
<dbReference type="eggNOG" id="COG2145">
    <property type="taxonomic scope" value="Bacteria"/>
</dbReference>
<dbReference type="HOGENOM" id="CLU_019943_0_1_9"/>
<dbReference type="OrthoDB" id="9778146at2"/>
<dbReference type="UniPathway" id="UPA00060">
    <property type="reaction ID" value="UER00139"/>
</dbReference>
<dbReference type="Proteomes" id="UP000002300">
    <property type="component" value="Chromosome"/>
</dbReference>
<dbReference type="GO" id="GO:0005524">
    <property type="term" value="F:ATP binding"/>
    <property type="evidence" value="ECO:0007669"/>
    <property type="project" value="UniProtKB-UniRule"/>
</dbReference>
<dbReference type="GO" id="GO:0004417">
    <property type="term" value="F:hydroxyethylthiazole kinase activity"/>
    <property type="evidence" value="ECO:0007669"/>
    <property type="project" value="UniProtKB-UniRule"/>
</dbReference>
<dbReference type="GO" id="GO:0000287">
    <property type="term" value="F:magnesium ion binding"/>
    <property type="evidence" value="ECO:0007669"/>
    <property type="project" value="UniProtKB-UniRule"/>
</dbReference>
<dbReference type="GO" id="GO:0009228">
    <property type="term" value="P:thiamine biosynthetic process"/>
    <property type="evidence" value="ECO:0007669"/>
    <property type="project" value="UniProtKB-KW"/>
</dbReference>
<dbReference type="GO" id="GO:0009229">
    <property type="term" value="P:thiamine diphosphate biosynthetic process"/>
    <property type="evidence" value="ECO:0007669"/>
    <property type="project" value="UniProtKB-UniRule"/>
</dbReference>
<dbReference type="CDD" id="cd01170">
    <property type="entry name" value="THZ_kinase"/>
    <property type="match status" value="1"/>
</dbReference>
<dbReference type="Gene3D" id="3.40.1190.20">
    <property type="match status" value="1"/>
</dbReference>
<dbReference type="HAMAP" id="MF_00228">
    <property type="entry name" value="Thz_kinase"/>
    <property type="match status" value="1"/>
</dbReference>
<dbReference type="InterPro" id="IPR000417">
    <property type="entry name" value="Hyethyz_kinase"/>
</dbReference>
<dbReference type="InterPro" id="IPR029056">
    <property type="entry name" value="Ribokinase-like"/>
</dbReference>
<dbReference type="NCBIfam" id="NF006830">
    <property type="entry name" value="PRK09355.1"/>
    <property type="match status" value="1"/>
</dbReference>
<dbReference type="NCBIfam" id="TIGR00694">
    <property type="entry name" value="thiM"/>
    <property type="match status" value="1"/>
</dbReference>
<dbReference type="Pfam" id="PF02110">
    <property type="entry name" value="HK"/>
    <property type="match status" value="1"/>
</dbReference>
<dbReference type="PIRSF" id="PIRSF000513">
    <property type="entry name" value="Thz_kinase"/>
    <property type="match status" value="1"/>
</dbReference>
<dbReference type="PRINTS" id="PR01099">
    <property type="entry name" value="HYETHTZKNASE"/>
</dbReference>
<dbReference type="SUPFAM" id="SSF53613">
    <property type="entry name" value="Ribokinase-like"/>
    <property type="match status" value="1"/>
</dbReference>
<proteinExistence type="inferred from homology"/>
<reference key="1">
    <citation type="journal article" date="2008" name="Chem. Biol. Interact.">
        <title>Extending the Bacillus cereus group genomics to putative food-borne pathogens of different toxicity.</title>
        <authorList>
            <person name="Lapidus A."/>
            <person name="Goltsman E."/>
            <person name="Auger S."/>
            <person name="Galleron N."/>
            <person name="Segurens B."/>
            <person name="Dossat C."/>
            <person name="Land M.L."/>
            <person name="Broussolle V."/>
            <person name="Brillard J."/>
            <person name="Guinebretiere M.-H."/>
            <person name="Sanchis V."/>
            <person name="Nguen-the C."/>
            <person name="Lereclus D."/>
            <person name="Richardson P."/>
            <person name="Wincker P."/>
            <person name="Weissenbach J."/>
            <person name="Ehrlich S.D."/>
            <person name="Sorokin A."/>
        </authorList>
    </citation>
    <scope>NUCLEOTIDE SEQUENCE [LARGE SCALE GENOMIC DNA]</scope>
    <source>
        <strain>DSM 22905 / CIP 110041 / 391-98 / NVH 391-98</strain>
    </source>
</reference>
<keyword id="KW-0067">ATP-binding</keyword>
<keyword id="KW-0418">Kinase</keyword>
<keyword id="KW-0460">Magnesium</keyword>
<keyword id="KW-0479">Metal-binding</keyword>
<keyword id="KW-0547">Nucleotide-binding</keyword>
<keyword id="KW-0784">Thiamine biosynthesis</keyword>
<keyword id="KW-0808">Transferase</keyword>
<gene>
    <name evidence="1" type="primary">thiM</name>
    <name type="ordered locus">Bcer98_0363</name>
</gene>
<sequence>MHITEIAKVVEQVRKTNPLVHNITNVVVTNFTANGLLALGASPVMAYAKEEVAEMASIAGALVLNMGTLRPDEVEAMLIAGKAANQQHVPVLFDPVGAGATLYRTEVARHIPNEIKLAMIRGNAAEIANVIHEKWEIKGVDAGTGNGDSVAIATKAANKLGTVAVITGKEDIVTDGKRTVIIRNGHPILTKVTGTGCLLTSVMGAFVAVEQDYVKAAVAALTFYGVAAEIAASKTVDQGPGSFQVEFLNQLANVTVSDIEQYGKAEEVR</sequence>
<feature type="chain" id="PRO_1000078214" description="Hydroxyethylthiazole kinase">
    <location>
        <begin position="1"/>
        <end position="269"/>
    </location>
</feature>
<feature type="binding site" evidence="1">
    <location>
        <position position="45"/>
    </location>
    <ligand>
        <name>substrate</name>
    </ligand>
</feature>
<feature type="binding site" evidence="1">
    <location>
        <position position="121"/>
    </location>
    <ligand>
        <name>ATP</name>
        <dbReference type="ChEBI" id="CHEBI:30616"/>
    </ligand>
</feature>
<feature type="binding site" evidence="1">
    <location>
        <position position="167"/>
    </location>
    <ligand>
        <name>ATP</name>
        <dbReference type="ChEBI" id="CHEBI:30616"/>
    </ligand>
</feature>
<feature type="binding site" evidence="1">
    <location>
        <position position="194"/>
    </location>
    <ligand>
        <name>substrate</name>
    </ligand>
</feature>
<evidence type="ECO:0000255" key="1">
    <source>
        <dbReference type="HAMAP-Rule" id="MF_00228"/>
    </source>
</evidence>
<accession>A7GKR3</accession>
<protein>
    <recommendedName>
        <fullName evidence="1">Hydroxyethylthiazole kinase</fullName>
        <ecNumber evidence="1">2.7.1.50</ecNumber>
    </recommendedName>
    <alternativeName>
        <fullName evidence="1">4-methyl-5-beta-hydroxyethylthiazole kinase</fullName>
        <shortName evidence="1">TH kinase</shortName>
        <shortName evidence="1">Thz kinase</shortName>
    </alternativeName>
</protein>
<comment type="function">
    <text evidence="1">Catalyzes the phosphorylation of the hydroxyl group of 4-methyl-5-beta-hydroxyethylthiazole (THZ).</text>
</comment>
<comment type="catalytic activity">
    <reaction evidence="1">
        <text>5-(2-hydroxyethyl)-4-methylthiazole + ATP = 4-methyl-5-(2-phosphooxyethyl)-thiazole + ADP + H(+)</text>
        <dbReference type="Rhea" id="RHEA:24212"/>
        <dbReference type="ChEBI" id="CHEBI:15378"/>
        <dbReference type="ChEBI" id="CHEBI:17957"/>
        <dbReference type="ChEBI" id="CHEBI:30616"/>
        <dbReference type="ChEBI" id="CHEBI:58296"/>
        <dbReference type="ChEBI" id="CHEBI:456216"/>
        <dbReference type="EC" id="2.7.1.50"/>
    </reaction>
</comment>
<comment type="cofactor">
    <cofactor evidence="1">
        <name>Mg(2+)</name>
        <dbReference type="ChEBI" id="CHEBI:18420"/>
    </cofactor>
</comment>
<comment type="pathway">
    <text evidence="1">Cofactor biosynthesis; thiamine diphosphate biosynthesis; 4-methyl-5-(2-phosphoethyl)-thiazole from 5-(2-hydroxyethyl)-4-methylthiazole: step 1/1.</text>
</comment>
<comment type="similarity">
    <text evidence="1">Belongs to the Thz kinase family.</text>
</comment>
<organism>
    <name type="scientific">Bacillus cytotoxicus (strain DSM 22905 / CIP 110041 / 391-98 / NVH 391-98)</name>
    <dbReference type="NCBI Taxonomy" id="315749"/>
    <lineage>
        <taxon>Bacteria</taxon>
        <taxon>Bacillati</taxon>
        <taxon>Bacillota</taxon>
        <taxon>Bacilli</taxon>
        <taxon>Bacillales</taxon>
        <taxon>Bacillaceae</taxon>
        <taxon>Bacillus</taxon>
        <taxon>Bacillus cereus group</taxon>
    </lineage>
</organism>